<comment type="function">
    <text evidence="1">Attaches a formyl group to the free amino group of methionyl-tRNA(fMet). The formyl group appears to play a dual role in the initiator identity of N-formylmethionyl-tRNA by promoting its recognition by IF2 and preventing the misappropriation of this tRNA by the elongation apparatus.</text>
</comment>
<comment type="catalytic activity">
    <reaction evidence="1">
        <text>L-methionyl-tRNA(fMet) + (6R)-10-formyltetrahydrofolate = N-formyl-L-methionyl-tRNA(fMet) + (6S)-5,6,7,8-tetrahydrofolate + H(+)</text>
        <dbReference type="Rhea" id="RHEA:24380"/>
        <dbReference type="Rhea" id="RHEA-COMP:9952"/>
        <dbReference type="Rhea" id="RHEA-COMP:9953"/>
        <dbReference type="ChEBI" id="CHEBI:15378"/>
        <dbReference type="ChEBI" id="CHEBI:57453"/>
        <dbReference type="ChEBI" id="CHEBI:78530"/>
        <dbReference type="ChEBI" id="CHEBI:78844"/>
        <dbReference type="ChEBI" id="CHEBI:195366"/>
        <dbReference type="EC" id="2.1.2.9"/>
    </reaction>
</comment>
<comment type="similarity">
    <text evidence="1">Belongs to the Fmt family.</text>
</comment>
<gene>
    <name evidence="1" type="primary">fmt</name>
    <name type="ordered locus">STH1344</name>
</gene>
<dbReference type="EC" id="2.1.2.9" evidence="1"/>
<dbReference type="EMBL" id="AP006840">
    <property type="protein sequence ID" value="BAD40329.1"/>
    <property type="molecule type" value="Genomic_DNA"/>
</dbReference>
<dbReference type="RefSeq" id="WP_011195475.1">
    <property type="nucleotide sequence ID" value="NC_006177.1"/>
</dbReference>
<dbReference type="SMR" id="Q67PR4"/>
<dbReference type="STRING" id="292459.STH1344"/>
<dbReference type="KEGG" id="sth:STH1344"/>
<dbReference type="eggNOG" id="COG0223">
    <property type="taxonomic scope" value="Bacteria"/>
</dbReference>
<dbReference type="HOGENOM" id="CLU_033347_1_1_9"/>
<dbReference type="OrthoDB" id="9802815at2"/>
<dbReference type="Proteomes" id="UP000000417">
    <property type="component" value="Chromosome"/>
</dbReference>
<dbReference type="GO" id="GO:0005829">
    <property type="term" value="C:cytosol"/>
    <property type="evidence" value="ECO:0007669"/>
    <property type="project" value="TreeGrafter"/>
</dbReference>
<dbReference type="GO" id="GO:0004479">
    <property type="term" value="F:methionyl-tRNA formyltransferase activity"/>
    <property type="evidence" value="ECO:0007669"/>
    <property type="project" value="UniProtKB-UniRule"/>
</dbReference>
<dbReference type="CDD" id="cd08646">
    <property type="entry name" value="FMT_core_Met-tRNA-FMT_N"/>
    <property type="match status" value="1"/>
</dbReference>
<dbReference type="CDD" id="cd08704">
    <property type="entry name" value="Met_tRNA_FMT_C"/>
    <property type="match status" value="1"/>
</dbReference>
<dbReference type="FunFam" id="3.40.50.12230:FF:000001">
    <property type="entry name" value="Methionyl-tRNA formyltransferase"/>
    <property type="match status" value="1"/>
</dbReference>
<dbReference type="Gene3D" id="3.40.50.12230">
    <property type="match status" value="1"/>
</dbReference>
<dbReference type="HAMAP" id="MF_00182">
    <property type="entry name" value="Formyl_trans"/>
    <property type="match status" value="1"/>
</dbReference>
<dbReference type="InterPro" id="IPR005794">
    <property type="entry name" value="Fmt"/>
</dbReference>
<dbReference type="InterPro" id="IPR005793">
    <property type="entry name" value="Formyl_trans_C"/>
</dbReference>
<dbReference type="InterPro" id="IPR002376">
    <property type="entry name" value="Formyl_transf_N"/>
</dbReference>
<dbReference type="InterPro" id="IPR036477">
    <property type="entry name" value="Formyl_transf_N_sf"/>
</dbReference>
<dbReference type="InterPro" id="IPR011034">
    <property type="entry name" value="Formyl_transferase-like_C_sf"/>
</dbReference>
<dbReference type="InterPro" id="IPR044135">
    <property type="entry name" value="Met-tRNA-FMT_C"/>
</dbReference>
<dbReference type="InterPro" id="IPR041711">
    <property type="entry name" value="Met-tRNA-FMT_N"/>
</dbReference>
<dbReference type="NCBIfam" id="TIGR00460">
    <property type="entry name" value="fmt"/>
    <property type="match status" value="1"/>
</dbReference>
<dbReference type="PANTHER" id="PTHR11138">
    <property type="entry name" value="METHIONYL-TRNA FORMYLTRANSFERASE"/>
    <property type="match status" value="1"/>
</dbReference>
<dbReference type="PANTHER" id="PTHR11138:SF5">
    <property type="entry name" value="METHIONYL-TRNA FORMYLTRANSFERASE, MITOCHONDRIAL"/>
    <property type="match status" value="1"/>
</dbReference>
<dbReference type="Pfam" id="PF02911">
    <property type="entry name" value="Formyl_trans_C"/>
    <property type="match status" value="1"/>
</dbReference>
<dbReference type="Pfam" id="PF00551">
    <property type="entry name" value="Formyl_trans_N"/>
    <property type="match status" value="1"/>
</dbReference>
<dbReference type="SUPFAM" id="SSF50486">
    <property type="entry name" value="FMT C-terminal domain-like"/>
    <property type="match status" value="1"/>
</dbReference>
<dbReference type="SUPFAM" id="SSF53328">
    <property type="entry name" value="Formyltransferase"/>
    <property type="match status" value="1"/>
</dbReference>
<name>FMT_SYMTH</name>
<feature type="chain" id="PRO_0000083066" description="Methionyl-tRNA formyltransferase">
    <location>
        <begin position="1"/>
        <end position="326"/>
    </location>
</feature>
<feature type="region of interest" description="Disordered" evidence="2">
    <location>
        <begin position="307"/>
        <end position="326"/>
    </location>
</feature>
<feature type="binding site" evidence="1">
    <location>
        <begin position="110"/>
        <end position="113"/>
    </location>
    <ligand>
        <name>(6S)-5,6,7,8-tetrahydrofolate</name>
        <dbReference type="ChEBI" id="CHEBI:57453"/>
    </ligand>
</feature>
<organism>
    <name type="scientific">Symbiobacterium thermophilum (strain DSM 24528 / JCM 14929 / IAM 14863 / T)</name>
    <dbReference type="NCBI Taxonomy" id="292459"/>
    <lineage>
        <taxon>Bacteria</taxon>
        <taxon>Bacillati</taxon>
        <taxon>Bacillota</taxon>
        <taxon>Clostridia</taxon>
        <taxon>Eubacteriales</taxon>
        <taxon>Symbiobacteriaceae</taxon>
        <taxon>Symbiobacterium</taxon>
    </lineage>
</organism>
<proteinExistence type="inferred from homology"/>
<accession>Q67PR4</accession>
<protein>
    <recommendedName>
        <fullName evidence="1">Methionyl-tRNA formyltransferase</fullName>
        <ecNumber evidence="1">2.1.2.9</ecNumber>
    </recommendedName>
</protein>
<keyword id="KW-0648">Protein biosynthesis</keyword>
<keyword id="KW-1185">Reference proteome</keyword>
<keyword id="KW-0808">Transferase</keyword>
<evidence type="ECO:0000255" key="1">
    <source>
        <dbReference type="HAMAP-Rule" id="MF_00182"/>
    </source>
</evidence>
<evidence type="ECO:0000256" key="2">
    <source>
        <dbReference type="SAM" id="MobiDB-lite"/>
    </source>
</evidence>
<reference key="1">
    <citation type="journal article" date="2004" name="Nucleic Acids Res.">
        <title>Genome sequence of Symbiobacterium thermophilum, an uncultivable bacterium that depends on microbial commensalism.</title>
        <authorList>
            <person name="Ueda K."/>
            <person name="Yamashita A."/>
            <person name="Ishikawa J."/>
            <person name="Shimada M."/>
            <person name="Watsuji T."/>
            <person name="Morimura K."/>
            <person name="Ikeda H."/>
            <person name="Hattori M."/>
            <person name="Beppu T."/>
        </authorList>
    </citation>
    <scope>NUCLEOTIDE SEQUENCE [LARGE SCALE GENOMIC DNA]</scope>
    <source>
        <strain>DSM 24528 / JCM 14929 / IAM 14863 / T</strain>
    </source>
</reference>
<sequence length="326" mass="34785">MLKILFMGTPEFAAVSLRALLEAGYPVVGVVTQPDKPAGRGGKLRPSPVKEVALAHGLPVFQPRRLRRPEVVAQLKELGSDLTVVVAYGQILSREALEISPLGSINVHASLLPRWRGAAPIQRAIMAGDVETGVCTMWMDEGMDTGDVCLTARVPIGPDTTGGELHDELARVGAELLLETVRRVEAGDAPRIPQPAEGVTYAAKLEPADEVIDWARPAEELYNQIRALNPWPGAYTNGPRGRLKIWRASVVPNPEPGAEPGTVVALVRREGFTVAAGDGALLVREVQPHGKARMDAQSFVNGGGVQVGTRFSPPEAPQREPAPGEA</sequence>